<protein>
    <recommendedName>
        <fullName>mRNA export factor</fullName>
    </recommendedName>
    <alternativeName>
        <fullName>Immediate-early protein IE63</fullName>
    </alternativeName>
    <alternativeName>
        <fullName>Infected cell protein 27</fullName>
        <shortName>ICP27</shortName>
    </alternativeName>
    <alternativeName>
        <fullName>VMW63</fullName>
    </alternativeName>
</protein>
<evidence type="ECO:0000256" key="1">
    <source>
        <dbReference type="SAM" id="MobiDB-lite"/>
    </source>
</evidence>
<evidence type="ECO:0000269" key="2">
    <source>
    </source>
</evidence>
<evidence type="ECO:0000269" key="3">
    <source>
    </source>
</evidence>
<evidence type="ECO:0000269" key="4">
    <source>
    </source>
</evidence>
<evidence type="ECO:0000269" key="5">
    <source>
    </source>
</evidence>
<evidence type="ECO:0000269" key="6">
    <source>
    </source>
</evidence>
<evidence type="ECO:0000269" key="7">
    <source>
    </source>
</evidence>
<evidence type="ECO:0000269" key="8">
    <source>
    </source>
</evidence>
<evidence type="ECO:0000269" key="9">
    <source>
    </source>
</evidence>
<evidence type="ECO:0000269" key="10">
    <source>
    </source>
</evidence>
<evidence type="ECO:0000269" key="11">
    <source>
    </source>
</evidence>
<evidence type="ECO:0000269" key="12">
    <source>
    </source>
</evidence>
<evidence type="ECO:0000269" key="13">
    <source>
    </source>
</evidence>
<evidence type="ECO:0000269" key="14">
    <source>
    </source>
</evidence>
<evidence type="ECO:0000269" key="15">
    <source>
    </source>
</evidence>
<evidence type="ECO:0000269" key="16">
    <source>
    </source>
</evidence>
<evidence type="ECO:0000305" key="17"/>
<evidence type="ECO:0000305" key="18">
    <source>
    </source>
</evidence>
<evidence type="ECO:0000305" key="19">
    <source>
    </source>
</evidence>
<evidence type="ECO:0007829" key="20">
    <source>
        <dbReference type="PDB" id="4YXP"/>
    </source>
</evidence>
<sequence>MATDIDMLIDLGLDLSDSDLDEDPPEPAESRRDDLESDSSGECSSSDEDMEDPHGEDGPEPILDAARPAVRPSRPEDPGVPSTQTPRPTERQGPNDPQPAPHSVWSRLGARRPSCSPEQHGGKVARLQPPPTKAQPARGGRRGRRRGRGRGGPGAADGLSDPRRRAPRTNRNPGGPRPGAGWTDGPGAPHGEAWRGSEQPDPPGGQRTRGVRQAPPPLMTLAIAPPPADPRAPAPERKAPAADTIDATTRLVLRSISERAAVDRISESFGRSAQVMHDPFGGQPFPAANSPWAPVLAGQGGPFDAETRRVSWETLVAHGPSLYRTFAGNPRAASTAKAMRDCVLRQENFIEALASADETLAWCKMCIHHNLPLRPQDPIIGTTAAVLDNLATRLRPFLQCYLKARGLCGLDELCSRRRLADIKDIASFVFVILARLANRVERGVAEIDYATLGVGVGEKMHFYLPGACMAGLIEILDTHRQECSSRVCELTASHIVAPPYVHGKYFYCNSLF</sequence>
<organismHost>
    <name type="scientific">Homo sapiens</name>
    <name type="common">Human</name>
    <dbReference type="NCBI Taxonomy" id="9606"/>
</organismHost>
<feature type="chain" id="PRO_0000115823" description="mRNA export factor">
    <location>
        <begin position="1"/>
        <end position="512"/>
    </location>
</feature>
<feature type="zinc finger region" description="CHC2-type" evidence="12 13">
    <location>
        <begin position="400"/>
        <end position="488"/>
    </location>
</feature>
<feature type="region of interest" description="Disordered" evidence="1">
    <location>
        <begin position="1"/>
        <end position="243"/>
    </location>
</feature>
<feature type="region of interest" description="Interaction with host ALYREF">
    <location>
        <begin position="104"/>
        <end position="112"/>
    </location>
</feature>
<feature type="region of interest" description="RGG-box">
    <location>
        <begin position="138"/>
        <end position="152"/>
    </location>
</feature>
<feature type="region of interest" description="Important for homodimerization" evidence="12">
    <location>
        <begin position="500"/>
        <end position="512"/>
    </location>
</feature>
<feature type="short sequence motif" description="Nuclear export signal">
    <location>
        <begin position="5"/>
        <end position="17"/>
    </location>
</feature>
<feature type="short sequence motif" description="Nuclear localization signal">
    <location>
        <begin position="110"/>
        <end position="138"/>
    </location>
</feature>
<feature type="compositionally biased region" description="Low complexity" evidence="1">
    <location>
        <begin position="1"/>
        <end position="15"/>
    </location>
</feature>
<feature type="compositionally biased region" description="Acidic residues" evidence="1">
    <location>
        <begin position="16"/>
        <end position="26"/>
    </location>
</feature>
<feature type="compositionally biased region" description="Acidic residues" evidence="1">
    <location>
        <begin position="35"/>
        <end position="51"/>
    </location>
</feature>
<feature type="compositionally biased region" description="Basic residues" evidence="1">
    <location>
        <begin position="139"/>
        <end position="149"/>
    </location>
</feature>
<feature type="compositionally biased region" description="Pro residues" evidence="1">
    <location>
        <begin position="214"/>
        <end position="233"/>
    </location>
</feature>
<feature type="binding site" evidence="12 13">
    <location>
        <position position="400"/>
    </location>
    <ligand>
        <name>Zn(2+)</name>
        <dbReference type="ChEBI" id="CHEBI:29105"/>
    </ligand>
</feature>
<feature type="binding site" evidence="12 13">
    <location>
        <position position="479"/>
    </location>
    <ligand>
        <name>Zn(2+)</name>
        <dbReference type="ChEBI" id="CHEBI:29105"/>
    </ligand>
</feature>
<feature type="binding site" evidence="12 13">
    <location>
        <position position="483"/>
    </location>
    <ligand>
        <name>Zn(2+)</name>
        <dbReference type="ChEBI" id="CHEBI:29105"/>
    </ligand>
</feature>
<feature type="binding site" evidence="12 13">
    <location>
        <position position="488"/>
    </location>
    <ligand>
        <name>Zn(2+)</name>
        <dbReference type="ChEBI" id="CHEBI:29105"/>
    </ligand>
</feature>
<feature type="modified residue" description="Phosphoserine; by host" evidence="18">
    <location>
        <position position="16"/>
    </location>
</feature>
<feature type="modified residue" description="Phosphoserine; by host" evidence="18">
    <location>
        <position position="18"/>
    </location>
</feature>
<feature type="modified residue" description="Phosphoserine; by host" evidence="18">
    <location>
        <position position="114"/>
    </location>
</feature>
<feature type="modified residue" description="Dimethylated arginine; by host" evidence="19">
    <location>
        <position position="138"/>
    </location>
</feature>
<feature type="modified residue" description="Omega-N-methylarginine; by host" evidence="19">
    <location>
        <position position="148"/>
    </location>
</feature>
<feature type="modified residue" description="Dimethylated arginine; by host" evidence="19">
    <location>
        <position position="150"/>
    </location>
</feature>
<feature type="sequence variant" description="In strain: Nonneuroinvasive mutant HF10.">
    <original>A</original>
    <variation>V</variation>
    <location>
        <position position="137"/>
    </location>
</feature>
<feature type="sequence variant" description="In strain: Nonneuroinvasive mutant HF10.">
    <original>Q</original>
    <variation>P</variation>
    <location>
        <position position="206"/>
    </location>
</feature>
<feature type="sequence variant" description="In strain: Nonneuroinvasive mutant HF10 and 17 syn+.">
    <original>T</original>
    <variation>A</variation>
    <location>
        <position position="383"/>
    </location>
</feature>
<feature type="mutagenesis site" description="Impaired homodimerization." evidence="12">
    <location>
        <begin position="500"/>
        <end position="512"/>
    </location>
</feature>
<feature type="helix" evidence="20">
    <location>
        <begin position="247"/>
        <end position="254"/>
    </location>
</feature>
<feature type="helix" evidence="20">
    <location>
        <begin position="256"/>
        <end position="259"/>
    </location>
</feature>
<feature type="helix" evidence="20">
    <location>
        <begin position="262"/>
        <end position="275"/>
    </location>
</feature>
<feature type="turn" evidence="20">
    <location>
        <begin position="279"/>
        <end position="282"/>
    </location>
</feature>
<feature type="helix" evidence="20">
    <location>
        <begin position="293"/>
        <end position="296"/>
    </location>
</feature>
<feature type="turn" evidence="20">
    <location>
        <begin position="305"/>
        <end position="308"/>
    </location>
</feature>
<feature type="helix" evidence="20">
    <location>
        <begin position="312"/>
        <end position="328"/>
    </location>
</feature>
<feature type="helix" evidence="20">
    <location>
        <begin position="330"/>
        <end position="346"/>
    </location>
</feature>
<feature type="helix" evidence="20">
    <location>
        <begin position="349"/>
        <end position="368"/>
    </location>
</feature>
<feature type="helix" evidence="20">
    <location>
        <begin position="378"/>
        <end position="381"/>
    </location>
</feature>
<feature type="helix" evidence="20">
    <location>
        <begin position="383"/>
        <end position="405"/>
    </location>
</feature>
<feature type="helix" evidence="20">
    <location>
        <begin position="410"/>
        <end position="416"/>
    </location>
</feature>
<feature type="helix" evidence="20">
    <location>
        <begin position="419"/>
        <end position="421"/>
    </location>
</feature>
<feature type="helix" evidence="20">
    <location>
        <begin position="425"/>
        <end position="442"/>
    </location>
</feature>
<feature type="strand" evidence="20">
    <location>
        <begin position="445"/>
        <end position="447"/>
    </location>
</feature>
<feature type="helix" evidence="20">
    <location>
        <begin position="449"/>
        <end position="452"/>
    </location>
</feature>
<feature type="helix" evidence="20">
    <location>
        <begin position="467"/>
        <end position="478"/>
    </location>
</feature>
<feature type="helix" evidence="20">
    <location>
        <begin position="479"/>
        <end position="481"/>
    </location>
</feature>
<feature type="helix" evidence="20">
    <location>
        <begin position="486"/>
        <end position="496"/>
    </location>
</feature>
<gene>
    <name type="ORF">UL54</name>
</gene>
<name>ICP27_HHV11</name>
<reference key="1">
    <citation type="journal article" date="1988" name="J. Gen. Virol.">
        <title>The DNA sequences of the long repeat region and adjoining parts of the long unique region in the genome of herpes simplex virus type 1.</title>
        <authorList>
            <person name="Perry L.J."/>
            <person name="McGeoch D.J."/>
        </authorList>
    </citation>
    <scope>NUCLEOTIDE SEQUENCE [GENOMIC DNA]</scope>
</reference>
<reference key="2">
    <citation type="journal article" date="1988" name="J. Gen. Virol.">
        <title>The complete DNA sequence of the long unique region in the genome of herpes simplex virus type 1.</title>
        <authorList>
            <person name="McGeoch D.J."/>
            <person name="Dalrymple M.A."/>
            <person name="Davison A.J."/>
            <person name="Dolan A."/>
            <person name="Frame M.C."/>
            <person name="McNab D."/>
            <person name="Perry L.J."/>
            <person name="Scott J.E."/>
            <person name="Taylor P."/>
        </authorList>
    </citation>
    <scope>NUCLEOTIDE SEQUENCE [LARGE SCALE GENOMIC DNA]</scope>
</reference>
<reference key="3">
    <citation type="journal article" date="2007" name="Microbes Infect.">
        <title>Determination and analysis of the DNA sequence of highly attenuated herpes simplex virus type 1 mutant HF10, a potential oncolytic virus.</title>
        <authorList>
            <person name="Ushijima Y."/>
            <person name="Luo C."/>
            <person name="Goshima F."/>
            <person name="Yamauchi Y."/>
            <person name="Kimura H."/>
            <person name="Nishiyama Y."/>
        </authorList>
    </citation>
    <scope>NUCLEOTIDE SEQUENCE [LARGE SCALE GENOMIC DNA]</scope>
    <source>
        <strain>Nonneuroinvasive mutant HF10</strain>
    </source>
</reference>
<reference key="4">
    <citation type="submission" date="2008-12" db="EMBL/GenBank/DDBJ databases">
        <title>Herpes simplex virus type 1 bacterial artificial chromosome.</title>
        <authorList>
            <person name="Cunningham C."/>
            <person name="Davison A.J."/>
        </authorList>
    </citation>
    <scope>NUCLEOTIDE SEQUENCE [LARGE SCALE GENOMIC DNA]</scope>
    <source>
        <strain>17 syn+</strain>
    </source>
</reference>
<reference key="5">
    <citation type="journal article" date="1997" name="J. Virol.">
        <title>Physical and functional interactions between herpes simplex virus immediate-early proteins ICP4 and ICP27.</title>
        <authorList>
            <person name="Panagiotidis C.A."/>
            <person name="Lium E.K."/>
            <person name="Silverstein S.J."/>
        </authorList>
    </citation>
    <scope>INTERACTION WITH ICP4</scope>
</reference>
<reference key="6">
    <citation type="journal article" date="1998" name="Virology">
        <title>The herpes simplex virus immediate-early protein ICP27 shuttles between nucleus and cytoplasm.</title>
        <authorList>
            <person name="Mears W.E."/>
            <person name="Rice S.A."/>
        </authorList>
    </citation>
    <scope>SUBCELLULAR LOCATION</scope>
</reference>
<reference key="7">
    <citation type="journal article" date="1998" name="Genes Dev.">
        <title>ICP27 mediates HSV RNA export by shuttling through a leucine-rich nuclear export signal and binding viral intronless RNAs through an RGG motif.</title>
        <authorList>
            <person name="Sandri-Goldin R.M."/>
        </authorList>
    </citation>
    <scope>FUNCTION</scope>
</reference>
<reference key="8">
    <citation type="journal article" date="1999" name="J. Virol.">
        <title>Analysis of the phosphorylation sites of herpes simplex virus type 1 regulatory protein ICP27.</title>
        <authorList>
            <person name="Zhi Y."/>
            <person name="Sandri-Goldin R.M."/>
        </authorList>
    </citation>
    <scope>PHOSPHORYLATION AT SER-16; SER-18 AND SER-114</scope>
</reference>
<reference key="9">
    <citation type="journal article" date="2001" name="J. Virol.">
        <title>Herpes simplex virus IE63 (ICP27) protein interacts with spliceosome-associated protein 145 and inhibits splicing prior to the first catalytic step.</title>
        <authorList>
            <person name="Bryant H.E."/>
            <person name="Wadd S.E."/>
            <person name="Lamond A.I."/>
            <person name="Silverstein S.J."/>
            <person name="Clements J.B."/>
        </authorList>
    </citation>
    <scope>FUNCTION</scope>
</reference>
<reference key="10">
    <citation type="journal article" date="2002" name="J. Virol.">
        <title>ICP27 interacts with the RNA export factor Aly/REF to direct herpes simplex virus type 1 intronless mRNAs to the TAP export pathway.</title>
        <authorList>
            <person name="Chen I.-H.B."/>
            <person name="Sciabica K.S."/>
            <person name="Sandri-Goldin R.M."/>
        </authorList>
    </citation>
    <scope>INTERACTION WITH HOST ALYREF/THOC4</scope>
</reference>
<reference key="11">
    <citation type="journal article" date="2003" name="EMBO J.">
        <title>ICP27 interacts with SRPK1 to mediate HSV splicing inhibition by altering SR protein phosphorylation.</title>
        <authorList>
            <person name="Sciabica K.S."/>
            <person name="Dai Q.J."/>
            <person name="Sandri-Goldin R.M."/>
        </authorList>
    </citation>
    <scope>FUNCTION</scope>
    <scope>INTERACTION WITH HOST SRPK1</scope>
</reference>
<reference key="12">
    <citation type="journal article" date="2006" name="J. Virol.">
        <title>ICP27 interacts with the C-terminal domain of RNA polymerase II and facilitates its recruitment to herpes simplex virus 1 transcription sites, where it undergoes proteasomal degradation during infection.</title>
        <authorList>
            <person name="Dai-Ju J.Q."/>
            <person name="Li L."/>
            <person name="Johnson L.A."/>
            <person name="Sandri-Goldin R.M."/>
        </authorList>
    </citation>
    <scope>FUNCTION</scope>
</reference>
<reference key="13">
    <citation type="journal article" date="2008" name="Front. Biosci.">
        <title>The many roles of the regulatory protein ICP27 during herpes simplex virus infection.</title>
        <authorList>
            <person name="Sandri-Goldin R.M."/>
        </authorList>
    </citation>
    <scope>REVIEW</scope>
</reference>
<reference key="14">
    <citation type="journal article" date="2009" name="J. Virol.">
        <title>Arginine methylation of the ICP27 RGG box regulates ICP27 export and is required for efficient herpes simplex virus 1 replication.</title>
        <authorList>
            <person name="Souki S.K."/>
            <person name="Gershon P.D."/>
            <person name="Sandri-Goldin R.M."/>
        </authorList>
    </citation>
    <scope>METHYLATION AT ARG-138; ARG-148 AND ARG-150</scope>
</reference>
<reference key="15">
    <citation type="journal article" date="2009" name="J. Virol.">
        <title>Arginine methylation of the ICP27 RGG box regulates the functional interactions of ICP27 with SRPK1 and Aly/REF during herpes simplex virus 1 infection.</title>
        <authorList>
            <person name="Souki S.K."/>
            <person name="Sandri-Goldin R.M."/>
        </authorList>
    </citation>
    <scope>INTERACTION WITH HOST SRPK1</scope>
    <scope>FUNCTION</scope>
</reference>
<reference key="16">
    <citation type="journal article" date="2009" name="J. Virol.">
        <title>The cellular RNA export receptor TAP/NXF1 is required for ICP27-mediated export of herpes simplex virus 1 RNA, but the TREX complex adaptor protein Aly/REF appears to be dispensable.</title>
        <authorList>
            <person name="Johnson L.A."/>
            <person name="Li L."/>
            <person name="Sandri-Goldin R.M."/>
        </authorList>
    </citation>
    <scope>INTERACTION WITH HOST NXF1</scope>
    <scope>FUNCTION</scope>
</reference>
<reference key="17">
    <citation type="journal article" date="2012" name="J. Biol. Chem.">
        <title>Herpes simplex virus ICP27 protein directly interacts with the nuclear pore complex through Nup62, inhibiting host nucleocytoplasmic transport pathways.</title>
        <authorList>
            <person name="Malik P."/>
            <person name="Tabarraei A."/>
            <person name="Kehlenbach R.H."/>
            <person name="Korfali N."/>
            <person name="Iwasawa R."/>
            <person name="Graham S.V."/>
            <person name="Schirmer E.C."/>
        </authorList>
    </citation>
    <scope>INTERACTION WITH HOST NUP62</scope>
    <scope>FUNCTION</scope>
</reference>
<reference key="18">
    <citation type="journal article" date="2011" name="PLoS Pathog.">
        <title>Structural basis for the recognition of cellular mRNA export factor REF by herpes viral proteins HSV-1 ICP27 and HVS ORF57.</title>
        <authorList>
            <person name="Tunnicliffe R.B."/>
            <person name="Hautbergue G.M."/>
            <person name="Kalra P."/>
            <person name="Jackson B.R."/>
            <person name="Whitehouse A."/>
            <person name="Wilson S.A."/>
            <person name="Golovanov A.P."/>
        </authorList>
    </citation>
    <scope>STRUCTURE BY NMR OF 103-138 IN COMPLEX WITH ALYREF2</scope>
    <scope>INTERACTION WITH HOST ALYREF AND ALYREF2</scope>
</reference>
<reference key="19">
    <citation type="journal article" date="2015" name="J. Virol.">
        <title>Structure of C-Terminal Domain of the Multifunctional ICP27 Protein from Herpes Simplex Virus-1.</title>
        <authorList>
            <person name="Patel V."/>
            <person name="Dahlroth S.L."/>
            <person name="Rajakannan V."/>
            <person name="Ho H.T."/>
            <person name="Cornvik T."/>
            <person name="Nordlund P."/>
        </authorList>
    </citation>
    <scope>X-RAY CRYSTALLOGRAPHY (2.0 ANGSTROMS) OF 190-512 IN COMPLEX WITH ZINC IONS</scope>
    <scope>SUBUNIT</scope>
    <scope>DOMAIN</scope>
</reference>
<reference key="20">
    <citation type="journal article" date="2015" name="Sci. Rep.">
        <title>The structure of the folded domain from the signature multifunctional protein ICP27 from herpes simplex virus-1 reveals an intertwined dimer.</title>
        <authorList>
            <person name="Tunnicliffe R.B."/>
            <person name="Schacht M."/>
            <person name="Levy C."/>
            <person name="Jowitt T.A."/>
            <person name="Sandri-Goldin R.M."/>
            <person name="Golovanov A.P."/>
        </authorList>
    </citation>
    <scope>X-RAY CRYSTALLOGRAPHY (1.92 ANGSTROMS) OF 241-512 IN COMPLEX WITH ZINC IONS</scope>
    <scope>SUBUNIT</scope>
    <scope>DOMAIN</scope>
    <scope>SUBCELLULAR LOCATION</scope>
    <scope>MUTAGENESIS OF 500-TYR--PHE-512</scope>
</reference>
<accession>P10238</accession>
<accession>B9VQI3</accession>
<accession>Q09I80</accession>
<keyword id="KW-0002">3D-structure</keyword>
<keyword id="KW-1074">Activation of host NF-kappa-B by virus</keyword>
<keyword id="KW-0010">Activator</keyword>
<keyword id="KW-0244">Early protein</keyword>
<keyword id="KW-1262">Eukaryotic host gene expression shutoff by virus</keyword>
<keyword id="KW-1078">G1/S host cell cycle checkpoint dysregulation by virus</keyword>
<keyword id="KW-1035">Host cytoplasm</keyword>
<keyword id="KW-1190">Host gene expression shutoff by virus</keyword>
<keyword id="KW-1192">Host mRNA suppression by virus</keyword>
<keyword id="KW-1048">Host nucleus</keyword>
<keyword id="KW-0945">Host-virus interaction</keyword>
<keyword id="KW-1103">Inhibition of host pre-mRNA processing by virus</keyword>
<keyword id="KW-0479">Metal-binding</keyword>
<keyword id="KW-0488">Methylation</keyword>
<keyword id="KW-1121">Modulation of host cell cycle by virus</keyword>
<keyword id="KW-0597">Phosphoprotein</keyword>
<keyword id="KW-1185">Reference proteome</keyword>
<keyword id="KW-0694">RNA-binding</keyword>
<keyword id="KW-0804">Transcription</keyword>
<keyword id="KW-0805">Transcription regulation</keyword>
<keyword id="KW-0862">Zinc</keyword>
<keyword id="KW-0863">Zinc-finger</keyword>
<organism>
    <name type="scientific">Human herpesvirus 1 (strain 17)</name>
    <name type="common">HHV-1</name>
    <name type="synonym">Human herpes simplex virus 1</name>
    <dbReference type="NCBI Taxonomy" id="10299"/>
    <lineage>
        <taxon>Viruses</taxon>
        <taxon>Duplodnaviria</taxon>
        <taxon>Heunggongvirae</taxon>
        <taxon>Peploviricota</taxon>
        <taxon>Herviviricetes</taxon>
        <taxon>Herpesvirales</taxon>
        <taxon>Orthoherpesviridae</taxon>
        <taxon>Alphaherpesvirinae</taxon>
        <taxon>Simplexvirus</taxon>
        <taxon>Simplexvirus humanalpha1</taxon>
        <taxon>Human herpesvirus 1</taxon>
    </lineage>
</organism>
<comment type="function">
    <text evidence="3 5 6 8 9 11 16">Multifunctional regulator of the expression of viral genes that contributes to the shutoff of host protein synthesis and mediates nuclear export of viral intronless mRNAs. Early in infection, this immediate early (EI) protein mediates the inhibition of cellular splicing. This results in the accumulation of unprocessed 3'end pre-mRNAs which can't be exported from the nucleus. Cellular protein synthesis is thereby shut off early after virus infection. Later in the infection, it helps recruit cellular RNA polymerase II to viral replication sites and promotes the nuclear export of viral intronless mRNAs by interacting with mRNAs and host NXF1/TAP. ICP27 binds to NUP62 which may provide facilitated viral mRNA export and may indirectly compete with some host cell transport receptors for binding and inhibit cellular nucleocytoplasmic transport pathways (PubMed:22334672). Also stimulates translation of viral transcripts. Repression of host gene expression blocks the cell cycle at the G1 phase and prevents apoptosis. Seems to silence the 3' splice site of the promyelocytic leukemia (PML) intron 7a, thereby switching PML isoforms from PML-II to PML-V. This could be linked to the accelerated mRNA export induced by ICP27 which might not provide sufficient time for PML pre-mRNA to be spliced in the nucleus.</text>
</comment>
<comment type="subunit">
    <text evidence="4 5 8 9 10 11 12 13 14">Homodimer (PubMed:26062451, PubMed:26085142). Interacts with host RBP1; this interaction facilitates the RNA polymerase recruitment to viral transcription sites. Interacts (via the RGG box) with host ALYREF/THOC4; this interaction recruits ALYREF to viral replication compartments and probably directs viral mRNA to the TAP/NFX1 pathway (PubMed:12438613). Interacts with host ALYREF2 (PubMed:21253573). Interacts (via the RGG box) with host SRPK1; this interaction relocalizes SRPK1 to the nucleus and seems to alter its activity (PubMed:12660167, PubMed:19553338). Interacts with ICP4; this interaction modulates ICP4 DNA-binding activity (PubMed:8995681). Interacts with host NXF1; this interaction allows efficient export of HHV-1 early and late transcripts (PubMed:19369354).</text>
</comment>
<comment type="interaction">
    <interactant intactId="EBI-6883946">
        <id>P10238</id>
    </interactant>
    <interactant intactId="EBI-7185388">
        <id>P08392</id>
        <label>ICP4</label>
    </interactant>
    <organismsDiffer>false</organismsDiffer>
    <experiments>5</experiments>
</comment>
<comment type="interaction">
    <interactant intactId="EBI-6883946">
        <id>P10238</id>
    </interactant>
    <interactant intactId="EBI-347978">
        <id>P37198</id>
        <label>NUP62</label>
    </interactant>
    <organismsDiffer>true</organismsDiffer>
    <experiments>3</experiments>
</comment>
<comment type="interaction">
    <interactant intactId="EBI-6883946">
        <id>P10238</id>
    </interactant>
    <interactant intactId="EBI-398874">
        <id>Q9UBU9</id>
        <label>NXF1</label>
    </interactant>
    <organismsDiffer>true</organismsDiffer>
    <experiments>4</experiments>
</comment>
<comment type="subcellular location">
    <subcellularLocation>
        <location evidence="15">Host cytoplasm</location>
    </subcellularLocation>
    <subcellularLocation>
        <location evidence="12 15">Host nucleus</location>
    </subcellularLocation>
    <text evidence="15">Shuttles between the nucleus and the cytoplasm.</text>
</comment>
<comment type="domain">
    <text>Binds viral intronless RNAs through the RGG region.</text>
</comment>
<comment type="domain">
    <text evidence="12 13">The C-terminus is essential for homodimerization.</text>
</comment>
<comment type="PTM">
    <text evidence="7">Methylated within the RGG box possibly by host PRMT1. When hypomethylated, ICP27 is exported to the cytoplasm earlier and more rapidly.</text>
</comment>
<comment type="PTM">
    <text evidence="2">Phosphorylated.</text>
</comment>
<comment type="similarity">
    <text evidence="17">Belongs to the HHV-1 ICP27 protein family.</text>
</comment>
<comment type="caution">
    <text evidence="17">A role in degradation of host polymerase has been suggested in PubMed:16537625, but this could be a consequence of binding to immature mRNAs simultaneously to transcription by the polymerase.</text>
</comment>
<proteinExistence type="evidence at protein level"/>
<dbReference type="EMBL" id="X14112">
    <property type="protein sequence ID" value="CAA32290.1"/>
    <property type="molecule type" value="Genomic_DNA"/>
</dbReference>
<dbReference type="EMBL" id="DQ889502">
    <property type="protein sequence ID" value="ABI63515.1"/>
    <property type="molecule type" value="Genomic_DNA"/>
</dbReference>
<dbReference type="EMBL" id="FJ593289">
    <property type="protein sequence ID" value="ACM62278.1"/>
    <property type="molecule type" value="Genomic_DNA"/>
</dbReference>
<dbReference type="PIR" id="I30089">
    <property type="entry name" value="WMBEY4"/>
</dbReference>
<dbReference type="RefSeq" id="YP_009137130.1">
    <property type="nucleotide sequence ID" value="NC_001806.2"/>
</dbReference>
<dbReference type="PDB" id="2KT5">
    <property type="method" value="NMR"/>
    <property type="chains" value="B=103-138"/>
</dbReference>
<dbReference type="PDB" id="4YXP">
    <property type="method" value="X-ray"/>
    <property type="resolution" value="1.92 A"/>
    <property type="chains" value="A/B=241-512"/>
</dbReference>
<dbReference type="PDB" id="5BQK">
    <property type="method" value="X-ray"/>
    <property type="resolution" value="2.00 A"/>
    <property type="chains" value="A/B/C=242-512"/>
</dbReference>
<dbReference type="PDBsum" id="2KT5"/>
<dbReference type="PDBsum" id="4YXP"/>
<dbReference type="PDBsum" id="5BQK"/>
<dbReference type="BMRB" id="P10238"/>
<dbReference type="SMR" id="P10238"/>
<dbReference type="BioGRID" id="971451">
    <property type="interactions" value="8"/>
</dbReference>
<dbReference type="DIP" id="DIP-57688N"/>
<dbReference type="IntAct" id="P10238">
    <property type="interactions" value="5"/>
</dbReference>
<dbReference type="MINT" id="P10238"/>
<dbReference type="iPTMnet" id="P10238"/>
<dbReference type="GeneID" id="24271474"/>
<dbReference type="KEGG" id="vg:24271474"/>
<dbReference type="EvolutionaryTrace" id="P10238"/>
<dbReference type="Proteomes" id="UP000009294">
    <property type="component" value="Segment"/>
</dbReference>
<dbReference type="Proteomes" id="UP000180652">
    <property type="component" value="Segment"/>
</dbReference>
<dbReference type="GO" id="GO:0030430">
    <property type="term" value="C:host cell cytoplasm"/>
    <property type="evidence" value="ECO:0007669"/>
    <property type="project" value="UniProtKB-SubCell"/>
</dbReference>
<dbReference type="GO" id="GO:0042025">
    <property type="term" value="C:host cell nucleus"/>
    <property type="evidence" value="ECO:0007669"/>
    <property type="project" value="UniProtKB-SubCell"/>
</dbReference>
<dbReference type="GO" id="GO:0003723">
    <property type="term" value="F:RNA binding"/>
    <property type="evidence" value="ECO:0007669"/>
    <property type="project" value="UniProtKB-KW"/>
</dbReference>
<dbReference type="GO" id="GO:0008270">
    <property type="term" value="F:zinc ion binding"/>
    <property type="evidence" value="ECO:0007669"/>
    <property type="project" value="UniProtKB-KW"/>
</dbReference>
<dbReference type="GO" id="GO:0006355">
    <property type="term" value="P:regulation of DNA-templated transcription"/>
    <property type="evidence" value="ECO:0007669"/>
    <property type="project" value="InterPro"/>
</dbReference>
<dbReference type="GO" id="GO:0085033">
    <property type="term" value="P:symbiont-mediated activation of host NF-kappaB cascade"/>
    <property type="evidence" value="ECO:0007669"/>
    <property type="project" value="UniProtKB-KW"/>
</dbReference>
<dbReference type="GO" id="GO:0039645">
    <property type="term" value="P:symbiont-mediated perturbation of host cell cycle G1/S transition checkpoint"/>
    <property type="evidence" value="ECO:0007669"/>
    <property type="project" value="UniProtKB-KW"/>
</dbReference>
<dbReference type="GO" id="GO:0039657">
    <property type="term" value="P:symbiont-mediated suppression of host gene expression"/>
    <property type="evidence" value="ECO:0007669"/>
    <property type="project" value="UniProtKB-KW"/>
</dbReference>
<dbReference type="GO" id="GO:0039524">
    <property type="term" value="P:symbiont-mediated suppression of host mRNA processing"/>
    <property type="evidence" value="ECO:0007669"/>
    <property type="project" value="UniProtKB-KW"/>
</dbReference>
<dbReference type="InterPro" id="IPR031752">
    <property type="entry name" value="HHV-1_REF-bd"/>
</dbReference>
<dbReference type="InterPro" id="IPR008648">
    <property type="entry name" value="ICP27-like"/>
</dbReference>
<dbReference type="Pfam" id="PF05459">
    <property type="entry name" value="Herpes_UL69"/>
    <property type="match status" value="1"/>
</dbReference>
<dbReference type="Pfam" id="PF16852">
    <property type="entry name" value="HHV-1_VABD"/>
    <property type="match status" value="1"/>
</dbReference>